<organism>
    <name type="scientific">Ovis aries</name>
    <name type="common">Sheep</name>
    <dbReference type="NCBI Taxonomy" id="9940"/>
    <lineage>
        <taxon>Eukaryota</taxon>
        <taxon>Metazoa</taxon>
        <taxon>Chordata</taxon>
        <taxon>Craniata</taxon>
        <taxon>Vertebrata</taxon>
        <taxon>Euteleostomi</taxon>
        <taxon>Mammalia</taxon>
        <taxon>Eutheria</taxon>
        <taxon>Laurasiatheria</taxon>
        <taxon>Artiodactyla</taxon>
        <taxon>Ruminantia</taxon>
        <taxon>Pecora</taxon>
        <taxon>Bovidae</taxon>
        <taxon>Caprinae</taxon>
        <taxon>Ovis</taxon>
    </lineage>
</organism>
<reference key="1">
    <citation type="journal article" date="1994" name="Biochim. Biophys. Acta">
        <title>Cloning and characterization of a full-length cDNA coding for ovine aldolase B from fetal mesonephros.</title>
        <authorList>
            <person name="Gianquinto L."/>
            <person name="Pailhoux E.A."/>
            <person name="Bezard J."/>
            <person name="Servel N."/>
            <person name="Kirszenbaum M."/>
            <person name="Cotinot C."/>
        </authorList>
    </citation>
    <scope>NUCLEOTIDE SEQUENCE [MRNA]</scope>
    <source>
        <tissue>Mesonephros</tissue>
    </source>
</reference>
<comment type="function">
    <text evidence="3">Catalyzes the aldol cleavage of fructose 1,6-biphosphate to form two triosephosphates dihydroxyacetone phosphate and D-glyceraldehyde 3-phosphate in glycolysis as well as the reverse stereospecific aldol addition reaction in gluconeogenesis. In fructolysis, metabolizes fructose 1-phosphate derived from the phosphorylation of dietary fructose by fructokinase into dihydroxyacetone phosphate and D-glyceraldehyde (By similarity). Acts as an adapter independently of its enzymatic activity, exerts a tumor suppressor role by stabilizing the ternary complex with G6PD and TP53 to inhibit G6PD activity and keep oxidative pentose phosphate metabolism in check (By similarity).</text>
</comment>
<comment type="catalytic activity">
    <reaction evidence="3">
        <text>beta-D-fructose 1,6-bisphosphate = D-glyceraldehyde 3-phosphate + dihydroxyacetone phosphate</text>
        <dbReference type="Rhea" id="RHEA:14729"/>
        <dbReference type="ChEBI" id="CHEBI:32966"/>
        <dbReference type="ChEBI" id="CHEBI:57642"/>
        <dbReference type="ChEBI" id="CHEBI:59776"/>
        <dbReference type="EC" id="4.1.2.13"/>
    </reaction>
    <physiologicalReaction direction="left-to-right" evidence="3">
        <dbReference type="Rhea" id="RHEA:14730"/>
    </physiologicalReaction>
    <physiologicalReaction direction="right-to-left" evidence="3">
        <dbReference type="Rhea" id="RHEA:14731"/>
    </physiologicalReaction>
</comment>
<comment type="catalytic activity">
    <reaction evidence="3">
        <text>beta-D-fructose 1-phosphate = D-glyceraldehyde + dihydroxyacetone phosphate</text>
        <dbReference type="Rhea" id="RHEA:30851"/>
        <dbReference type="ChEBI" id="CHEBI:17378"/>
        <dbReference type="ChEBI" id="CHEBI:57642"/>
        <dbReference type="ChEBI" id="CHEBI:138881"/>
    </reaction>
    <physiologicalReaction direction="left-to-right" evidence="3">
        <dbReference type="Rhea" id="RHEA:30852"/>
    </physiologicalReaction>
    <physiologicalReaction direction="right-to-left" evidence="3">
        <dbReference type="Rhea" id="RHEA:30853"/>
    </physiologicalReaction>
</comment>
<comment type="pathway">
    <text evidence="3">Carbohydrate degradation; glycolysis; D-glyceraldehyde 3-phosphate and glycerone phosphate from D-glucose: step 4/4.</text>
</comment>
<comment type="pathway">
    <text evidence="3">Carbohydrate biosynthesis; gluconeogenesis.</text>
</comment>
<comment type="pathway">
    <text evidence="3">Carbohydrate metabolism; fructose metabolism.</text>
</comment>
<comment type="subunit">
    <text evidence="3">Homotetramer. Interacts with BBS1, BBS2, BBS4 and BBS7. Forms a ternary complex with G6PD and TP53; this interaction is direct.</text>
</comment>
<comment type="subcellular location">
    <subcellularLocation>
        <location evidence="3">Cytoplasm</location>
        <location evidence="3">Cytosol</location>
    </subcellularLocation>
    <subcellularLocation>
        <location evidence="3">Cytoplasm</location>
        <location evidence="3">Cytoskeleton</location>
        <location evidence="3">Microtubule organizing center</location>
        <location evidence="3">Centrosome</location>
        <location evidence="3">Centriolar satellite</location>
    </subcellularLocation>
</comment>
<comment type="miscellaneous">
    <text>In vertebrates, 3 forms of this ubiquitous glycolytic enzyme are found, aldolase A in muscle, aldolase B in liver and aldolase C in brain.</text>
</comment>
<comment type="similarity">
    <text evidence="5">Belongs to the class I fructose-bisphosphate aldolase family.</text>
</comment>
<evidence type="ECO:0000250" key="1">
    <source>
        <dbReference type="UniProtKB" id="P00883"/>
    </source>
</evidence>
<evidence type="ECO:0000250" key="2">
    <source>
        <dbReference type="UniProtKB" id="P00884"/>
    </source>
</evidence>
<evidence type="ECO:0000250" key="3">
    <source>
        <dbReference type="UniProtKB" id="P05062"/>
    </source>
</evidence>
<evidence type="ECO:0000250" key="4">
    <source>
        <dbReference type="UniProtKB" id="Q91Y97"/>
    </source>
</evidence>
<evidence type="ECO:0000305" key="5"/>
<proteinExistence type="evidence at transcript level"/>
<feature type="initiator methionine" description="Removed" evidence="4">
    <location>
        <position position="1"/>
    </location>
</feature>
<feature type="chain" id="PRO_0000216944" description="Fructose-bisphosphate aldolase B">
    <location>
        <begin position="2"/>
        <end position="364"/>
    </location>
</feature>
<feature type="active site" description="Proton acceptor" evidence="1">
    <location>
        <position position="188"/>
    </location>
</feature>
<feature type="active site" description="Schiff-base intermediate with dihydroxyacetone-P" evidence="1">
    <location>
        <position position="230"/>
    </location>
</feature>
<feature type="binding site" evidence="1">
    <location>
        <position position="43"/>
    </location>
    <ligand>
        <name>beta-D-fructose 1,6-bisphosphate</name>
        <dbReference type="ChEBI" id="CHEBI:32966"/>
    </ligand>
</feature>
<feature type="binding site" evidence="1">
    <location>
        <begin position="272"/>
        <end position="274"/>
    </location>
    <ligand>
        <name>beta-D-fructose 1,6-bisphosphate</name>
        <dbReference type="ChEBI" id="CHEBI:32966"/>
    </ligand>
</feature>
<feature type="binding site" evidence="1">
    <location>
        <position position="304"/>
    </location>
    <ligand>
        <name>beta-D-fructose 1,6-bisphosphate</name>
        <dbReference type="ChEBI" id="CHEBI:32966"/>
    </ligand>
</feature>
<feature type="site" description="Necessary for preference for fructose 1,6-bisphosphate over fructose 1-phosphate" evidence="1">
    <location>
        <position position="364"/>
    </location>
</feature>
<feature type="modified residue" description="N-acetylalanine" evidence="4">
    <location>
        <position position="2"/>
    </location>
</feature>
<feature type="modified residue" description="N6-succinyllysine" evidence="4">
    <location>
        <position position="13"/>
    </location>
</feature>
<feature type="modified residue" description="Phosphoserine" evidence="3">
    <location>
        <position position="36"/>
    </location>
</feature>
<feature type="modified residue" description="Phosphothreonine" evidence="3">
    <location>
        <position position="39"/>
    </location>
</feature>
<feature type="modified residue" description="Phosphothreonine" evidence="3">
    <location>
        <position position="119"/>
    </location>
</feature>
<feature type="modified residue" description="N6-succinyllysine" evidence="4">
    <location>
        <position position="121"/>
    </location>
</feature>
<feature type="modified residue" description="Phosphoserine" evidence="3">
    <location>
        <position position="132"/>
    </location>
</feature>
<feature type="modified residue" description="Phosphoserine" evidence="3">
    <location>
        <position position="272"/>
    </location>
</feature>
<feature type="modified residue" description="Phosphoserine" evidence="3">
    <location>
        <position position="276"/>
    </location>
</feature>
<feature type="modified residue" description="Phosphoserine" evidence="2">
    <location>
        <position position="299"/>
    </location>
</feature>
<feature type="modified residue" description="Phosphoserine" evidence="2">
    <location>
        <position position="301"/>
    </location>
</feature>
<feature type="modified residue" description="Phosphoserine" evidence="3">
    <location>
        <position position="309"/>
    </location>
</feature>
<feature type="modified residue" description="N6-succinyllysine" evidence="4">
    <location>
        <position position="317"/>
    </location>
</feature>
<name>ALDOB_SHEEP</name>
<keyword id="KW-0007">Acetylation</keyword>
<keyword id="KW-0963">Cytoplasm</keyword>
<keyword id="KW-0206">Cytoskeleton</keyword>
<keyword id="KW-0324">Glycolysis</keyword>
<keyword id="KW-0456">Lyase</keyword>
<keyword id="KW-0597">Phosphoprotein</keyword>
<keyword id="KW-1185">Reference proteome</keyword>
<keyword id="KW-0704">Schiff base</keyword>
<dbReference type="EC" id="4.1.2.13" evidence="3"/>
<dbReference type="EMBL" id="Z29372">
    <property type="protein sequence ID" value="CAA82563.1"/>
    <property type="molecule type" value="mRNA"/>
</dbReference>
<dbReference type="PIR" id="S47540">
    <property type="entry name" value="S47540"/>
</dbReference>
<dbReference type="RefSeq" id="NP_001009809.1">
    <property type="nucleotide sequence ID" value="NM_001009809.1"/>
</dbReference>
<dbReference type="SMR" id="P52210"/>
<dbReference type="STRING" id="9940.ENSOARP00000008061"/>
<dbReference type="PaxDb" id="9940-ENSOARP00000008061"/>
<dbReference type="GeneID" id="443440"/>
<dbReference type="KEGG" id="oas:443440"/>
<dbReference type="CTD" id="229"/>
<dbReference type="eggNOG" id="KOG1557">
    <property type="taxonomic scope" value="Eukaryota"/>
</dbReference>
<dbReference type="OrthoDB" id="36455at2759"/>
<dbReference type="UniPathway" id="UPA00109">
    <property type="reaction ID" value="UER00183"/>
</dbReference>
<dbReference type="UniPathway" id="UPA00138"/>
<dbReference type="UniPathway" id="UPA00202"/>
<dbReference type="Proteomes" id="UP000002356">
    <property type="component" value="Unplaced"/>
</dbReference>
<dbReference type="GO" id="GO:0034451">
    <property type="term" value="C:centriolar satellite"/>
    <property type="evidence" value="ECO:0007669"/>
    <property type="project" value="UniProtKB-SubCell"/>
</dbReference>
<dbReference type="GO" id="GO:0005829">
    <property type="term" value="C:cytosol"/>
    <property type="evidence" value="ECO:0007669"/>
    <property type="project" value="UniProtKB-SubCell"/>
</dbReference>
<dbReference type="GO" id="GO:0061609">
    <property type="term" value="F:fructose-1-phosphate aldolase activity"/>
    <property type="evidence" value="ECO:0000250"/>
    <property type="project" value="UniProtKB"/>
</dbReference>
<dbReference type="GO" id="GO:0004332">
    <property type="term" value="F:fructose-bisphosphate aldolase activity"/>
    <property type="evidence" value="ECO:0000250"/>
    <property type="project" value="UniProtKB"/>
</dbReference>
<dbReference type="GO" id="GO:0006000">
    <property type="term" value="P:fructose metabolic process"/>
    <property type="evidence" value="ECO:0007669"/>
    <property type="project" value="UniProtKB-UniPathway"/>
</dbReference>
<dbReference type="GO" id="GO:0006094">
    <property type="term" value="P:gluconeogenesis"/>
    <property type="evidence" value="ECO:0007669"/>
    <property type="project" value="UniProtKB-UniPathway"/>
</dbReference>
<dbReference type="GO" id="GO:0006096">
    <property type="term" value="P:glycolytic process"/>
    <property type="evidence" value="ECO:0000250"/>
    <property type="project" value="UniProtKB"/>
</dbReference>
<dbReference type="CDD" id="cd00948">
    <property type="entry name" value="FBP_aldolase_I_a"/>
    <property type="match status" value="1"/>
</dbReference>
<dbReference type="FunFam" id="3.20.20.70:FF:000021">
    <property type="entry name" value="Fructose-bisphosphate aldolase"/>
    <property type="match status" value="1"/>
</dbReference>
<dbReference type="Gene3D" id="3.20.20.70">
    <property type="entry name" value="Aldolase class I"/>
    <property type="match status" value="1"/>
</dbReference>
<dbReference type="InterPro" id="IPR029768">
    <property type="entry name" value="Aldolase_I_AS"/>
</dbReference>
<dbReference type="InterPro" id="IPR013785">
    <property type="entry name" value="Aldolase_TIM"/>
</dbReference>
<dbReference type="InterPro" id="IPR000741">
    <property type="entry name" value="FBA_I"/>
</dbReference>
<dbReference type="NCBIfam" id="NF033379">
    <property type="entry name" value="FrucBisAld_I"/>
    <property type="match status" value="1"/>
</dbReference>
<dbReference type="PANTHER" id="PTHR11627">
    <property type="entry name" value="FRUCTOSE-BISPHOSPHATE ALDOLASE"/>
    <property type="match status" value="1"/>
</dbReference>
<dbReference type="Pfam" id="PF00274">
    <property type="entry name" value="Glycolytic"/>
    <property type="match status" value="1"/>
</dbReference>
<dbReference type="SUPFAM" id="SSF51569">
    <property type="entry name" value="Aldolase"/>
    <property type="match status" value="1"/>
</dbReference>
<dbReference type="PROSITE" id="PS00158">
    <property type="entry name" value="ALDOLASE_CLASS_I"/>
    <property type="match status" value="1"/>
</dbReference>
<protein>
    <recommendedName>
        <fullName>Fructose-bisphosphate aldolase B</fullName>
        <ecNumber evidence="3">4.1.2.13</ecNumber>
    </recommendedName>
    <alternativeName>
        <fullName>Liver-type aldolase</fullName>
    </alternativeName>
</protein>
<sequence>MAHQFPALTSEQKKALSETARRIVANGKGILAADESVGTMGNRLQRIKVENTEENRRQFRELLFTVDSSVSQSIGGVILFHETLYQKDGQGKLFRDILKEKGIVVGIKLDQGVAPLAGTNKETTVQGLDGLSERCAQYKKDGADFGKWRAVLKIDNQCPSHLAIQENANTLARYASIYQQNGLVPIVEPEVIPDGSHDMEHCQYVTEKVLAAVYKALNDHHVYLEGTLLKPNMVTAGHACTKKYTPEQVAMATVTALHRTVPAAVPGICFLSGGMSEEDATLNLNAINLCPLPKPWKLSFSYGRALQASALAAWGGKAENKKATQEAFMKRALANSQAAKGQYVHMGSSDSASTQSLFTASYTY</sequence>
<accession>P52210</accession>
<gene>
    <name type="primary">ALDOB</name>
</gene>